<name>SURE_CAMJD</name>
<dbReference type="EC" id="3.1.3.5" evidence="1"/>
<dbReference type="EMBL" id="CP000768">
    <property type="protein sequence ID" value="ABS43677.1"/>
    <property type="molecule type" value="Genomic_DNA"/>
</dbReference>
<dbReference type="SMR" id="A7H578"/>
<dbReference type="KEGG" id="cjd:JJD26997_1670"/>
<dbReference type="HOGENOM" id="CLU_045192_1_2_7"/>
<dbReference type="Proteomes" id="UP000002302">
    <property type="component" value="Chromosome"/>
</dbReference>
<dbReference type="GO" id="GO:0005737">
    <property type="term" value="C:cytoplasm"/>
    <property type="evidence" value="ECO:0007669"/>
    <property type="project" value="UniProtKB-SubCell"/>
</dbReference>
<dbReference type="GO" id="GO:0008254">
    <property type="term" value="F:3'-nucleotidase activity"/>
    <property type="evidence" value="ECO:0007669"/>
    <property type="project" value="TreeGrafter"/>
</dbReference>
<dbReference type="GO" id="GO:0008253">
    <property type="term" value="F:5'-nucleotidase activity"/>
    <property type="evidence" value="ECO:0007669"/>
    <property type="project" value="UniProtKB-UniRule"/>
</dbReference>
<dbReference type="GO" id="GO:0004309">
    <property type="term" value="F:exopolyphosphatase activity"/>
    <property type="evidence" value="ECO:0007669"/>
    <property type="project" value="TreeGrafter"/>
</dbReference>
<dbReference type="GO" id="GO:0046872">
    <property type="term" value="F:metal ion binding"/>
    <property type="evidence" value="ECO:0007669"/>
    <property type="project" value="UniProtKB-UniRule"/>
</dbReference>
<dbReference type="GO" id="GO:0000166">
    <property type="term" value="F:nucleotide binding"/>
    <property type="evidence" value="ECO:0007669"/>
    <property type="project" value="UniProtKB-KW"/>
</dbReference>
<dbReference type="FunFam" id="3.40.1210.10:FF:000001">
    <property type="entry name" value="5'/3'-nucleotidase SurE"/>
    <property type="match status" value="1"/>
</dbReference>
<dbReference type="Gene3D" id="3.40.1210.10">
    <property type="entry name" value="Survival protein SurE-like phosphatase/nucleotidase"/>
    <property type="match status" value="1"/>
</dbReference>
<dbReference type="HAMAP" id="MF_00060">
    <property type="entry name" value="SurE"/>
    <property type="match status" value="1"/>
</dbReference>
<dbReference type="InterPro" id="IPR030048">
    <property type="entry name" value="SurE"/>
</dbReference>
<dbReference type="InterPro" id="IPR002828">
    <property type="entry name" value="SurE-like_Pase/nucleotidase"/>
</dbReference>
<dbReference type="InterPro" id="IPR036523">
    <property type="entry name" value="SurE-like_sf"/>
</dbReference>
<dbReference type="NCBIfam" id="NF001490">
    <property type="entry name" value="PRK00346.1-4"/>
    <property type="match status" value="1"/>
</dbReference>
<dbReference type="NCBIfam" id="NF001494">
    <property type="entry name" value="PRK00346.2-4"/>
    <property type="match status" value="1"/>
</dbReference>
<dbReference type="NCBIfam" id="TIGR00087">
    <property type="entry name" value="surE"/>
    <property type="match status" value="1"/>
</dbReference>
<dbReference type="PANTHER" id="PTHR30457">
    <property type="entry name" value="5'-NUCLEOTIDASE SURE"/>
    <property type="match status" value="1"/>
</dbReference>
<dbReference type="PANTHER" id="PTHR30457:SF12">
    <property type="entry name" value="5'_3'-NUCLEOTIDASE SURE"/>
    <property type="match status" value="1"/>
</dbReference>
<dbReference type="Pfam" id="PF01975">
    <property type="entry name" value="SurE"/>
    <property type="match status" value="1"/>
</dbReference>
<dbReference type="SUPFAM" id="SSF64167">
    <property type="entry name" value="SurE-like"/>
    <property type="match status" value="1"/>
</dbReference>
<organism>
    <name type="scientific">Campylobacter jejuni subsp. doylei (strain ATCC BAA-1458 / RM4099 / 269.97)</name>
    <dbReference type="NCBI Taxonomy" id="360109"/>
    <lineage>
        <taxon>Bacteria</taxon>
        <taxon>Pseudomonadati</taxon>
        <taxon>Campylobacterota</taxon>
        <taxon>Epsilonproteobacteria</taxon>
        <taxon>Campylobacterales</taxon>
        <taxon>Campylobacteraceae</taxon>
        <taxon>Campylobacter</taxon>
    </lineage>
</organism>
<gene>
    <name evidence="1" type="primary">surE</name>
    <name type="ordered locus">JJD26997_1670</name>
</gene>
<keyword id="KW-0963">Cytoplasm</keyword>
<keyword id="KW-0378">Hydrolase</keyword>
<keyword id="KW-0479">Metal-binding</keyword>
<keyword id="KW-0547">Nucleotide-binding</keyword>
<reference key="1">
    <citation type="submission" date="2007-07" db="EMBL/GenBank/DDBJ databases">
        <title>Complete genome sequence of Campylobacter jejuni subsp doylei 269.97 isolated from human blood.</title>
        <authorList>
            <person name="Fouts D.E."/>
            <person name="Mongodin E.F."/>
            <person name="Puiu D."/>
            <person name="Sebastian Y."/>
            <person name="Miller W.G."/>
            <person name="Mandrell R.E."/>
            <person name="Lastovica A.J."/>
            <person name="Nelson K.E."/>
        </authorList>
    </citation>
    <scope>NUCLEOTIDE SEQUENCE [LARGE SCALE GENOMIC DNA]</scope>
    <source>
        <strain>ATCC BAA-1458 / RM4099 / 269.97</strain>
    </source>
</reference>
<sequence length="258" mass="29094">MKEILITNDDGYESEGLKKLVKMLKKEFKAKITIVAPASEKSACSHSITLTKPLRFVKVGKRFYKLDDGTPADCVYLAFHALYKTRLPDLVISGINKGANVGEDITYSGTCAGAMEAALQGISAIALSQFYKKSEKELDYKNALKITKKIIQNIFDKDFPLEKKEFLNINFPAKSKIKGIKICKAGKRVYNFEAHSNINPRGVEYYWLAAANLDFEDEKNSDIVLLKKGYATITPIMLDLTAYERMKKVKKWLKANNE</sequence>
<evidence type="ECO:0000255" key="1">
    <source>
        <dbReference type="HAMAP-Rule" id="MF_00060"/>
    </source>
</evidence>
<proteinExistence type="inferred from homology"/>
<comment type="function">
    <text evidence="1">Nucleotidase that shows phosphatase activity on nucleoside 5'-monophosphates.</text>
</comment>
<comment type="catalytic activity">
    <reaction evidence="1">
        <text>a ribonucleoside 5'-phosphate + H2O = a ribonucleoside + phosphate</text>
        <dbReference type="Rhea" id="RHEA:12484"/>
        <dbReference type="ChEBI" id="CHEBI:15377"/>
        <dbReference type="ChEBI" id="CHEBI:18254"/>
        <dbReference type="ChEBI" id="CHEBI:43474"/>
        <dbReference type="ChEBI" id="CHEBI:58043"/>
        <dbReference type="EC" id="3.1.3.5"/>
    </reaction>
</comment>
<comment type="cofactor">
    <cofactor evidence="1">
        <name>a divalent metal cation</name>
        <dbReference type="ChEBI" id="CHEBI:60240"/>
    </cofactor>
    <text evidence="1">Binds 1 divalent metal cation per subunit.</text>
</comment>
<comment type="subcellular location">
    <subcellularLocation>
        <location evidence="1">Cytoplasm</location>
    </subcellularLocation>
</comment>
<comment type="similarity">
    <text evidence="1">Belongs to the SurE nucleotidase family.</text>
</comment>
<accession>A7H578</accession>
<protein>
    <recommendedName>
        <fullName evidence="1">5'-nucleotidase SurE</fullName>
        <ecNumber evidence="1">3.1.3.5</ecNumber>
    </recommendedName>
    <alternativeName>
        <fullName evidence="1">Nucleoside 5'-monophosphate phosphohydrolase</fullName>
    </alternativeName>
</protein>
<feature type="chain" id="PRO_1000007717" description="5'-nucleotidase SurE">
    <location>
        <begin position="1"/>
        <end position="258"/>
    </location>
</feature>
<feature type="binding site" evidence="1">
    <location>
        <position position="9"/>
    </location>
    <ligand>
        <name>a divalent metal cation</name>
        <dbReference type="ChEBI" id="CHEBI:60240"/>
    </ligand>
</feature>
<feature type="binding site" evidence="1">
    <location>
        <position position="10"/>
    </location>
    <ligand>
        <name>a divalent metal cation</name>
        <dbReference type="ChEBI" id="CHEBI:60240"/>
    </ligand>
</feature>
<feature type="binding site" evidence="1">
    <location>
        <position position="42"/>
    </location>
    <ligand>
        <name>a divalent metal cation</name>
        <dbReference type="ChEBI" id="CHEBI:60240"/>
    </ligand>
</feature>
<feature type="binding site" evidence="1">
    <location>
        <position position="96"/>
    </location>
    <ligand>
        <name>a divalent metal cation</name>
        <dbReference type="ChEBI" id="CHEBI:60240"/>
    </ligand>
</feature>